<sequence>MLVDELCRLYSIIKTILNYGLSDFVPTHRLIFPLRIGSRFLLRVLNKHSQLTLGERFRLALQELGPIWIKFGQMLSTRRDIFPDSVADQLSILQDRVAPFDGIIAKMCIERAIGNSLETWFKDFQEIPLASASISQVHSARLKKNNKDIVIKIIRPGLLPVIKIDICLMYRLAKWICKFLPEGRKFKFSEVVSEYEKTLFNELNLLKETANTIQLRRNFKKSQILYIPKVYVDFCSENVMVMERIYGIPVYNLVALKKQKTNMKLLAERGIEIFFTQVFRDSFFHGDMHPGNIFISYKHPGNPKYISVDCGIVGSLNKKDKYYLAANFIAFFNHDYRKIAELHLDSGWIPLDTNIEDFECAMRTVFEPIFEQPLEKIPFSKILLYLFNTARYFNMEIQPQLILLQKTLLYIEGIVRQLYPNLNLWKSAQPFLERWMRDQLKLSTTICALKDKIPHWIDKIPELPNLLSHEFKRSCMLQKKIEILIRELRTQRTNHGQALFLFGVGATLVTSSIFLYIQDKYLKIFSIFLFVIGIFIWTIGWKRIIQ</sequence>
<proteinExistence type="inferred from homology"/>
<dbReference type="EC" id="2.7.-.-" evidence="1"/>
<dbReference type="EMBL" id="CP000016">
    <property type="protein sequence ID" value="AAZ41246.1"/>
    <property type="molecule type" value="Genomic_DNA"/>
</dbReference>
<dbReference type="RefSeq" id="WP_011283157.1">
    <property type="nucleotide sequence ID" value="NC_007292.1"/>
</dbReference>
<dbReference type="SMR" id="Q491V8"/>
<dbReference type="STRING" id="291272.BPEN_648"/>
<dbReference type="KEGG" id="bpn:BPEN_648"/>
<dbReference type="eggNOG" id="COG0661">
    <property type="taxonomic scope" value="Bacteria"/>
</dbReference>
<dbReference type="HOGENOM" id="CLU_006533_0_0_6"/>
<dbReference type="OrthoDB" id="9795390at2"/>
<dbReference type="UniPathway" id="UPA00232"/>
<dbReference type="Proteomes" id="UP000007794">
    <property type="component" value="Chromosome"/>
</dbReference>
<dbReference type="GO" id="GO:0005886">
    <property type="term" value="C:plasma membrane"/>
    <property type="evidence" value="ECO:0007669"/>
    <property type="project" value="UniProtKB-SubCell"/>
</dbReference>
<dbReference type="GO" id="GO:0005524">
    <property type="term" value="F:ATP binding"/>
    <property type="evidence" value="ECO:0007669"/>
    <property type="project" value="UniProtKB-KW"/>
</dbReference>
<dbReference type="GO" id="GO:0004672">
    <property type="term" value="F:protein kinase activity"/>
    <property type="evidence" value="ECO:0007669"/>
    <property type="project" value="UniProtKB-UniRule"/>
</dbReference>
<dbReference type="GO" id="GO:0010795">
    <property type="term" value="P:regulation of ubiquinone biosynthetic process"/>
    <property type="evidence" value="ECO:0007669"/>
    <property type="project" value="UniProtKB-UniRule"/>
</dbReference>
<dbReference type="GO" id="GO:0006744">
    <property type="term" value="P:ubiquinone biosynthetic process"/>
    <property type="evidence" value="ECO:0007669"/>
    <property type="project" value="UniProtKB-UniPathway"/>
</dbReference>
<dbReference type="CDD" id="cd13972">
    <property type="entry name" value="UbiB"/>
    <property type="match status" value="1"/>
</dbReference>
<dbReference type="Gene3D" id="1.10.510.10">
    <property type="entry name" value="Transferase(Phosphotransferase) domain 1"/>
    <property type="match status" value="1"/>
</dbReference>
<dbReference type="HAMAP" id="MF_00414">
    <property type="entry name" value="UbiB"/>
    <property type="match status" value="1"/>
</dbReference>
<dbReference type="InterPro" id="IPR004147">
    <property type="entry name" value="ABC1_dom"/>
</dbReference>
<dbReference type="InterPro" id="IPR011009">
    <property type="entry name" value="Kinase-like_dom_sf"/>
</dbReference>
<dbReference type="InterPro" id="IPR010232">
    <property type="entry name" value="UbiB"/>
</dbReference>
<dbReference type="InterPro" id="IPR045308">
    <property type="entry name" value="UbiB_bact"/>
</dbReference>
<dbReference type="InterPro" id="IPR050154">
    <property type="entry name" value="UbiB_kinase"/>
</dbReference>
<dbReference type="NCBIfam" id="NF003404">
    <property type="entry name" value="PRK04750.1"/>
    <property type="match status" value="1"/>
</dbReference>
<dbReference type="NCBIfam" id="TIGR01982">
    <property type="entry name" value="UbiB"/>
    <property type="match status" value="1"/>
</dbReference>
<dbReference type="PANTHER" id="PTHR10566">
    <property type="entry name" value="CHAPERONE-ACTIVITY OF BC1 COMPLEX CABC1 -RELATED"/>
    <property type="match status" value="1"/>
</dbReference>
<dbReference type="PANTHER" id="PTHR10566:SF113">
    <property type="entry name" value="PROTEIN ACTIVITY OF BC1 COMPLEX KINASE 7, CHLOROPLASTIC"/>
    <property type="match status" value="1"/>
</dbReference>
<dbReference type="Pfam" id="PF03109">
    <property type="entry name" value="ABC1"/>
    <property type="match status" value="1"/>
</dbReference>
<dbReference type="SUPFAM" id="SSF56112">
    <property type="entry name" value="Protein kinase-like (PK-like)"/>
    <property type="match status" value="1"/>
</dbReference>
<accession>Q491V8</accession>
<feature type="chain" id="PRO_1000123890" description="Probable protein kinase UbiB">
    <location>
        <begin position="1"/>
        <end position="546"/>
    </location>
</feature>
<feature type="transmembrane region" description="Helical" evidence="1">
    <location>
        <begin position="497"/>
        <end position="517"/>
    </location>
</feature>
<feature type="transmembrane region" description="Helical" evidence="1">
    <location>
        <begin position="521"/>
        <end position="541"/>
    </location>
</feature>
<feature type="domain" description="Protein kinase" evidence="1">
    <location>
        <begin position="123"/>
        <end position="501"/>
    </location>
</feature>
<feature type="active site" description="Proton acceptor" evidence="1">
    <location>
        <position position="287"/>
    </location>
</feature>
<feature type="binding site" evidence="1">
    <location>
        <begin position="129"/>
        <end position="137"/>
    </location>
    <ligand>
        <name>ATP</name>
        <dbReference type="ChEBI" id="CHEBI:30616"/>
    </ligand>
</feature>
<feature type="binding site" evidence="1">
    <location>
        <position position="152"/>
    </location>
    <ligand>
        <name>ATP</name>
        <dbReference type="ChEBI" id="CHEBI:30616"/>
    </ligand>
</feature>
<comment type="function">
    <text evidence="1">Is probably a protein kinase regulator of UbiI activity which is involved in aerobic coenzyme Q (ubiquinone) biosynthesis.</text>
</comment>
<comment type="pathway">
    <text>Cofactor biosynthesis; ubiquinone biosynthesis [regulation].</text>
</comment>
<comment type="subcellular location">
    <subcellularLocation>
        <location evidence="1">Cell inner membrane</location>
        <topology evidence="1">Multi-pass membrane protein</topology>
    </subcellularLocation>
</comment>
<comment type="similarity">
    <text evidence="1">Belongs to the ABC1 family. UbiB subfamily.</text>
</comment>
<organism>
    <name type="scientific">Blochmanniella pennsylvanica (strain BPEN)</name>
    <dbReference type="NCBI Taxonomy" id="291272"/>
    <lineage>
        <taxon>Bacteria</taxon>
        <taxon>Pseudomonadati</taxon>
        <taxon>Pseudomonadota</taxon>
        <taxon>Gammaproteobacteria</taxon>
        <taxon>Enterobacterales</taxon>
        <taxon>Enterobacteriaceae</taxon>
        <taxon>ant endosymbionts</taxon>
        <taxon>Candidatus Blochmanniella</taxon>
    </lineage>
</organism>
<protein>
    <recommendedName>
        <fullName evidence="1">Probable protein kinase UbiB</fullName>
        <ecNumber evidence="1">2.7.-.-</ecNumber>
    </recommendedName>
    <alternativeName>
        <fullName evidence="1">Ubiquinone biosynthesis protein UbiB</fullName>
    </alternativeName>
</protein>
<gene>
    <name evidence="1" type="primary">ubiB</name>
    <name type="ordered locus">BPEN_648</name>
</gene>
<keyword id="KW-0067">ATP-binding</keyword>
<keyword id="KW-0997">Cell inner membrane</keyword>
<keyword id="KW-1003">Cell membrane</keyword>
<keyword id="KW-0418">Kinase</keyword>
<keyword id="KW-0472">Membrane</keyword>
<keyword id="KW-0547">Nucleotide-binding</keyword>
<keyword id="KW-1185">Reference proteome</keyword>
<keyword id="KW-0808">Transferase</keyword>
<keyword id="KW-0812">Transmembrane</keyword>
<keyword id="KW-1133">Transmembrane helix</keyword>
<keyword id="KW-0831">Ubiquinone biosynthesis</keyword>
<reference key="1">
    <citation type="journal article" date="2005" name="Genome Res.">
        <title>Genome sequence of Blochmannia pennsylvanicus indicates parallel evolutionary trends among bacterial mutualists of insects.</title>
        <authorList>
            <person name="Degnan P.H."/>
            <person name="Lazarus A.B."/>
            <person name="Wernegreen J.J."/>
        </authorList>
    </citation>
    <scope>NUCLEOTIDE SEQUENCE [LARGE SCALE GENOMIC DNA]</scope>
    <source>
        <strain>BPEN</strain>
    </source>
</reference>
<evidence type="ECO:0000255" key="1">
    <source>
        <dbReference type="HAMAP-Rule" id="MF_00414"/>
    </source>
</evidence>
<name>UBIB_BLOPB</name>